<evidence type="ECO:0000255" key="1">
    <source>
        <dbReference type="HAMAP-Rule" id="MF_00206"/>
    </source>
</evidence>
<evidence type="ECO:0000255" key="2">
    <source>
        <dbReference type="PROSITE-ProRule" id="PRU01266"/>
    </source>
</evidence>
<protein>
    <recommendedName>
        <fullName evidence="1">Lipoyl synthase</fullName>
        <ecNumber evidence="1">2.8.1.8</ecNumber>
    </recommendedName>
    <alternativeName>
        <fullName evidence="1">Lip-syn</fullName>
        <shortName evidence="1">LS</shortName>
    </alternativeName>
    <alternativeName>
        <fullName evidence="1">Lipoate synthase</fullName>
    </alternativeName>
    <alternativeName>
        <fullName evidence="1">Lipoic acid synthase</fullName>
    </alternativeName>
    <alternativeName>
        <fullName evidence="1">Sulfur insertion protein LipA</fullName>
    </alternativeName>
</protein>
<accession>B0SQ03</accession>
<feature type="chain" id="PRO_1000204151" description="Lipoyl synthase">
    <location>
        <begin position="1"/>
        <end position="306"/>
    </location>
</feature>
<feature type="domain" description="Radical SAM core" evidence="2">
    <location>
        <begin position="64"/>
        <end position="278"/>
    </location>
</feature>
<feature type="binding site" evidence="1">
    <location>
        <position position="52"/>
    </location>
    <ligand>
        <name>[4Fe-4S] cluster</name>
        <dbReference type="ChEBI" id="CHEBI:49883"/>
        <label>1</label>
    </ligand>
</feature>
<feature type="binding site" evidence="1">
    <location>
        <position position="57"/>
    </location>
    <ligand>
        <name>[4Fe-4S] cluster</name>
        <dbReference type="ChEBI" id="CHEBI:49883"/>
        <label>1</label>
    </ligand>
</feature>
<feature type="binding site" evidence="1">
    <location>
        <position position="63"/>
    </location>
    <ligand>
        <name>[4Fe-4S] cluster</name>
        <dbReference type="ChEBI" id="CHEBI:49883"/>
        <label>1</label>
    </ligand>
</feature>
<feature type="binding site" evidence="1">
    <location>
        <position position="78"/>
    </location>
    <ligand>
        <name>[4Fe-4S] cluster</name>
        <dbReference type="ChEBI" id="CHEBI:49883"/>
        <label>2</label>
        <note>4Fe-4S-S-AdoMet</note>
    </ligand>
</feature>
<feature type="binding site" evidence="1">
    <location>
        <position position="82"/>
    </location>
    <ligand>
        <name>[4Fe-4S] cluster</name>
        <dbReference type="ChEBI" id="CHEBI:49883"/>
        <label>2</label>
        <note>4Fe-4S-S-AdoMet</note>
    </ligand>
</feature>
<feature type="binding site" evidence="1">
    <location>
        <position position="85"/>
    </location>
    <ligand>
        <name>[4Fe-4S] cluster</name>
        <dbReference type="ChEBI" id="CHEBI:49883"/>
        <label>2</label>
        <note>4Fe-4S-S-AdoMet</note>
    </ligand>
</feature>
<feature type="binding site" evidence="1">
    <location>
        <position position="289"/>
    </location>
    <ligand>
        <name>[4Fe-4S] cluster</name>
        <dbReference type="ChEBI" id="CHEBI:49883"/>
        <label>1</label>
    </ligand>
</feature>
<name>LIPA_LEPBP</name>
<dbReference type="EC" id="2.8.1.8" evidence="1"/>
<dbReference type="EMBL" id="CP000786">
    <property type="protein sequence ID" value="ABZ97569.1"/>
    <property type="molecule type" value="Genomic_DNA"/>
</dbReference>
<dbReference type="RefSeq" id="WP_012388448.1">
    <property type="nucleotide sequence ID" value="NC_010602.1"/>
</dbReference>
<dbReference type="SMR" id="B0SQ03"/>
<dbReference type="STRING" id="456481.LEPBI_I1462"/>
<dbReference type="KEGG" id="lbi:LEPBI_I1462"/>
<dbReference type="HOGENOM" id="CLU_033144_2_1_12"/>
<dbReference type="UniPathway" id="UPA00538">
    <property type="reaction ID" value="UER00593"/>
</dbReference>
<dbReference type="Proteomes" id="UP000001847">
    <property type="component" value="Chromosome I"/>
</dbReference>
<dbReference type="GO" id="GO:0005737">
    <property type="term" value="C:cytoplasm"/>
    <property type="evidence" value="ECO:0007669"/>
    <property type="project" value="UniProtKB-SubCell"/>
</dbReference>
<dbReference type="GO" id="GO:0051539">
    <property type="term" value="F:4 iron, 4 sulfur cluster binding"/>
    <property type="evidence" value="ECO:0007669"/>
    <property type="project" value="UniProtKB-UniRule"/>
</dbReference>
<dbReference type="GO" id="GO:0016992">
    <property type="term" value="F:lipoate synthase activity"/>
    <property type="evidence" value="ECO:0007669"/>
    <property type="project" value="UniProtKB-UniRule"/>
</dbReference>
<dbReference type="GO" id="GO:0046872">
    <property type="term" value="F:metal ion binding"/>
    <property type="evidence" value="ECO:0007669"/>
    <property type="project" value="UniProtKB-KW"/>
</dbReference>
<dbReference type="CDD" id="cd01335">
    <property type="entry name" value="Radical_SAM"/>
    <property type="match status" value="1"/>
</dbReference>
<dbReference type="Gene3D" id="3.20.20.70">
    <property type="entry name" value="Aldolase class I"/>
    <property type="match status" value="1"/>
</dbReference>
<dbReference type="HAMAP" id="MF_00206">
    <property type="entry name" value="Lipoyl_synth"/>
    <property type="match status" value="1"/>
</dbReference>
<dbReference type="InterPro" id="IPR013785">
    <property type="entry name" value="Aldolase_TIM"/>
</dbReference>
<dbReference type="InterPro" id="IPR006638">
    <property type="entry name" value="Elp3/MiaA/NifB-like_rSAM"/>
</dbReference>
<dbReference type="InterPro" id="IPR003698">
    <property type="entry name" value="Lipoyl_synth"/>
</dbReference>
<dbReference type="InterPro" id="IPR007197">
    <property type="entry name" value="rSAM"/>
</dbReference>
<dbReference type="NCBIfam" id="TIGR00510">
    <property type="entry name" value="lipA"/>
    <property type="match status" value="1"/>
</dbReference>
<dbReference type="NCBIfam" id="NF004019">
    <property type="entry name" value="PRK05481.1"/>
    <property type="match status" value="1"/>
</dbReference>
<dbReference type="NCBIfam" id="NF009544">
    <property type="entry name" value="PRK12928.1"/>
    <property type="match status" value="1"/>
</dbReference>
<dbReference type="PANTHER" id="PTHR10949">
    <property type="entry name" value="LIPOYL SYNTHASE"/>
    <property type="match status" value="1"/>
</dbReference>
<dbReference type="PANTHER" id="PTHR10949:SF0">
    <property type="entry name" value="LIPOYL SYNTHASE, MITOCHONDRIAL"/>
    <property type="match status" value="1"/>
</dbReference>
<dbReference type="Pfam" id="PF04055">
    <property type="entry name" value="Radical_SAM"/>
    <property type="match status" value="1"/>
</dbReference>
<dbReference type="PIRSF" id="PIRSF005963">
    <property type="entry name" value="Lipoyl_synth"/>
    <property type="match status" value="1"/>
</dbReference>
<dbReference type="SFLD" id="SFLDF00271">
    <property type="entry name" value="lipoyl_synthase"/>
    <property type="match status" value="1"/>
</dbReference>
<dbReference type="SFLD" id="SFLDG01058">
    <property type="entry name" value="lipoyl_synthase_like"/>
    <property type="match status" value="1"/>
</dbReference>
<dbReference type="SMART" id="SM00729">
    <property type="entry name" value="Elp3"/>
    <property type="match status" value="1"/>
</dbReference>
<dbReference type="SUPFAM" id="SSF102114">
    <property type="entry name" value="Radical SAM enzymes"/>
    <property type="match status" value="1"/>
</dbReference>
<dbReference type="PROSITE" id="PS51918">
    <property type="entry name" value="RADICAL_SAM"/>
    <property type="match status" value="1"/>
</dbReference>
<proteinExistence type="inferred from homology"/>
<keyword id="KW-0004">4Fe-4S</keyword>
<keyword id="KW-0963">Cytoplasm</keyword>
<keyword id="KW-0408">Iron</keyword>
<keyword id="KW-0411">Iron-sulfur</keyword>
<keyword id="KW-0479">Metal-binding</keyword>
<keyword id="KW-1185">Reference proteome</keyword>
<keyword id="KW-0949">S-adenosyl-L-methionine</keyword>
<keyword id="KW-0808">Transferase</keyword>
<reference key="1">
    <citation type="journal article" date="2008" name="PLoS ONE">
        <title>Genome sequence of the saprophyte Leptospira biflexa provides insights into the evolution of Leptospira and the pathogenesis of leptospirosis.</title>
        <authorList>
            <person name="Picardeau M."/>
            <person name="Bulach D.M."/>
            <person name="Bouchier C."/>
            <person name="Zuerner R.L."/>
            <person name="Zidane N."/>
            <person name="Wilson P.J."/>
            <person name="Creno S."/>
            <person name="Kuczek E.S."/>
            <person name="Bommezzadri S."/>
            <person name="Davis J.C."/>
            <person name="McGrath A."/>
            <person name="Johnson M.J."/>
            <person name="Boursaux-Eude C."/>
            <person name="Seemann T."/>
            <person name="Rouy Z."/>
            <person name="Coppel R.L."/>
            <person name="Rood J.I."/>
            <person name="Lajus A."/>
            <person name="Davies J.K."/>
            <person name="Medigue C."/>
            <person name="Adler B."/>
        </authorList>
    </citation>
    <scope>NUCLEOTIDE SEQUENCE [LARGE SCALE GENOMIC DNA]</scope>
    <source>
        <strain>Patoc 1 / ATCC 23582 / Paris</strain>
    </source>
</reference>
<gene>
    <name evidence="1" type="primary">lipA</name>
    <name type="ordered locus">LEPBI_I1462</name>
</gene>
<organism>
    <name type="scientific">Leptospira biflexa serovar Patoc (strain Patoc 1 / ATCC 23582 / Paris)</name>
    <dbReference type="NCBI Taxonomy" id="456481"/>
    <lineage>
        <taxon>Bacteria</taxon>
        <taxon>Pseudomonadati</taxon>
        <taxon>Spirochaetota</taxon>
        <taxon>Spirochaetia</taxon>
        <taxon>Leptospirales</taxon>
        <taxon>Leptospiraceae</taxon>
        <taxon>Leptospira</taxon>
    </lineage>
</organism>
<sequence>MNPLKKKPRSKNLNPTVPLPDWMKVRVSFPTDSDALSVVRAEVESKELHTVCESASCPNLNHCWNRKTATYMLAGDICTRRCQYCDVAFGKPKPLDSLEPERVARSVQSLGLRHVVLTAVNRDDLKDGGASHFAETITKIKTYHKDCTIEVLIPDFKAKEDSLQILYAAKPNIINHNIETVESLFPTITPQKNYKRSLEVLAHIANHGFLTKSGIILGLGETDEDVNQCLMDLFAHGVRMLTIGQYLQPGPTHYPVQSFVRPETFVMWKETAYKIGFKTVASGPLVRSSYHADEYFHEESQILPTE</sequence>
<comment type="function">
    <text evidence="1">Catalyzes the radical-mediated insertion of two sulfur atoms into the C-6 and C-8 positions of the octanoyl moiety bound to the lipoyl domains of lipoate-dependent enzymes, thereby converting the octanoylated domains into lipoylated derivatives.</text>
</comment>
<comment type="catalytic activity">
    <reaction evidence="1">
        <text>[[Fe-S] cluster scaffold protein carrying a second [4Fe-4S](2+) cluster] + N(6)-octanoyl-L-lysyl-[protein] + 2 oxidized [2Fe-2S]-[ferredoxin] + 2 S-adenosyl-L-methionine + 4 H(+) = [[Fe-S] cluster scaffold protein] + N(6)-[(R)-dihydrolipoyl]-L-lysyl-[protein] + 4 Fe(3+) + 2 hydrogen sulfide + 2 5'-deoxyadenosine + 2 L-methionine + 2 reduced [2Fe-2S]-[ferredoxin]</text>
        <dbReference type="Rhea" id="RHEA:16585"/>
        <dbReference type="Rhea" id="RHEA-COMP:9928"/>
        <dbReference type="Rhea" id="RHEA-COMP:10000"/>
        <dbReference type="Rhea" id="RHEA-COMP:10001"/>
        <dbReference type="Rhea" id="RHEA-COMP:10475"/>
        <dbReference type="Rhea" id="RHEA-COMP:14568"/>
        <dbReference type="Rhea" id="RHEA-COMP:14569"/>
        <dbReference type="ChEBI" id="CHEBI:15378"/>
        <dbReference type="ChEBI" id="CHEBI:17319"/>
        <dbReference type="ChEBI" id="CHEBI:29034"/>
        <dbReference type="ChEBI" id="CHEBI:29919"/>
        <dbReference type="ChEBI" id="CHEBI:33722"/>
        <dbReference type="ChEBI" id="CHEBI:33737"/>
        <dbReference type="ChEBI" id="CHEBI:33738"/>
        <dbReference type="ChEBI" id="CHEBI:57844"/>
        <dbReference type="ChEBI" id="CHEBI:59789"/>
        <dbReference type="ChEBI" id="CHEBI:78809"/>
        <dbReference type="ChEBI" id="CHEBI:83100"/>
        <dbReference type="EC" id="2.8.1.8"/>
    </reaction>
</comment>
<comment type="cofactor">
    <cofactor evidence="1">
        <name>[4Fe-4S] cluster</name>
        <dbReference type="ChEBI" id="CHEBI:49883"/>
    </cofactor>
    <text evidence="1">Binds 2 [4Fe-4S] clusters per subunit. One cluster is coordinated with 3 cysteines and an exchangeable S-adenosyl-L-methionine.</text>
</comment>
<comment type="pathway">
    <text evidence="1">Protein modification; protein lipoylation via endogenous pathway; protein N(6)-(lipoyl)lysine from octanoyl-[acyl-carrier-protein]: step 2/2.</text>
</comment>
<comment type="subcellular location">
    <subcellularLocation>
        <location evidence="1">Cytoplasm</location>
    </subcellularLocation>
</comment>
<comment type="similarity">
    <text evidence="1">Belongs to the radical SAM superfamily. Lipoyl synthase family.</text>
</comment>